<name>DXS_RHOE4</name>
<proteinExistence type="inferred from homology"/>
<comment type="function">
    <text evidence="1">Catalyzes the acyloin condensation reaction between C atoms 2 and 3 of pyruvate and glyceraldehyde 3-phosphate to yield 1-deoxy-D-xylulose-5-phosphate (DXP).</text>
</comment>
<comment type="catalytic activity">
    <reaction evidence="1">
        <text>D-glyceraldehyde 3-phosphate + pyruvate + H(+) = 1-deoxy-D-xylulose 5-phosphate + CO2</text>
        <dbReference type="Rhea" id="RHEA:12605"/>
        <dbReference type="ChEBI" id="CHEBI:15361"/>
        <dbReference type="ChEBI" id="CHEBI:15378"/>
        <dbReference type="ChEBI" id="CHEBI:16526"/>
        <dbReference type="ChEBI" id="CHEBI:57792"/>
        <dbReference type="ChEBI" id="CHEBI:59776"/>
        <dbReference type="EC" id="2.2.1.7"/>
    </reaction>
</comment>
<comment type="cofactor">
    <cofactor evidence="1">
        <name>Mg(2+)</name>
        <dbReference type="ChEBI" id="CHEBI:18420"/>
    </cofactor>
    <text evidence="1">Binds 1 Mg(2+) ion per subunit.</text>
</comment>
<comment type="cofactor">
    <cofactor evidence="1">
        <name>thiamine diphosphate</name>
        <dbReference type="ChEBI" id="CHEBI:58937"/>
    </cofactor>
    <text evidence="1">Binds 1 thiamine pyrophosphate per subunit.</text>
</comment>
<comment type="pathway">
    <text evidence="1">Metabolic intermediate biosynthesis; 1-deoxy-D-xylulose 5-phosphate biosynthesis; 1-deoxy-D-xylulose 5-phosphate from D-glyceraldehyde 3-phosphate and pyruvate: step 1/1.</text>
</comment>
<comment type="subunit">
    <text evidence="1">Homodimer.</text>
</comment>
<comment type="similarity">
    <text evidence="1">Belongs to the transketolase family. DXPS subfamily.</text>
</comment>
<gene>
    <name evidence="1" type="primary">dxs</name>
    <name type="ordered locus">RER_28360</name>
</gene>
<accession>C0ZYV9</accession>
<feature type="chain" id="PRO_1000205074" description="1-deoxy-D-xylulose-5-phosphate synthase">
    <location>
        <begin position="1"/>
        <end position="648"/>
    </location>
</feature>
<feature type="binding site" evidence="1">
    <location>
        <position position="73"/>
    </location>
    <ligand>
        <name>thiamine diphosphate</name>
        <dbReference type="ChEBI" id="CHEBI:58937"/>
    </ligand>
</feature>
<feature type="binding site" evidence="1">
    <location>
        <begin position="114"/>
        <end position="116"/>
    </location>
    <ligand>
        <name>thiamine diphosphate</name>
        <dbReference type="ChEBI" id="CHEBI:58937"/>
    </ligand>
</feature>
<feature type="binding site" evidence="1">
    <location>
        <position position="145"/>
    </location>
    <ligand>
        <name>Mg(2+)</name>
        <dbReference type="ChEBI" id="CHEBI:18420"/>
    </ligand>
</feature>
<feature type="binding site" evidence="1">
    <location>
        <begin position="146"/>
        <end position="147"/>
    </location>
    <ligand>
        <name>thiamine diphosphate</name>
        <dbReference type="ChEBI" id="CHEBI:58937"/>
    </ligand>
</feature>
<feature type="binding site" evidence="1">
    <location>
        <position position="175"/>
    </location>
    <ligand>
        <name>Mg(2+)</name>
        <dbReference type="ChEBI" id="CHEBI:18420"/>
    </ligand>
</feature>
<feature type="binding site" evidence="1">
    <location>
        <position position="175"/>
    </location>
    <ligand>
        <name>thiamine diphosphate</name>
        <dbReference type="ChEBI" id="CHEBI:58937"/>
    </ligand>
</feature>
<feature type="binding site" evidence="1">
    <location>
        <position position="286"/>
    </location>
    <ligand>
        <name>thiamine diphosphate</name>
        <dbReference type="ChEBI" id="CHEBI:58937"/>
    </ligand>
</feature>
<feature type="binding site" evidence="1">
    <location>
        <position position="367"/>
    </location>
    <ligand>
        <name>thiamine diphosphate</name>
        <dbReference type="ChEBI" id="CHEBI:58937"/>
    </ligand>
</feature>
<evidence type="ECO:0000255" key="1">
    <source>
        <dbReference type="HAMAP-Rule" id="MF_00315"/>
    </source>
</evidence>
<reference key="1">
    <citation type="submission" date="2005-03" db="EMBL/GenBank/DDBJ databases">
        <title>Comparison of the complete genome sequences of Rhodococcus erythropolis PR4 and Rhodococcus opacus B4.</title>
        <authorList>
            <person name="Takarada H."/>
            <person name="Sekine M."/>
            <person name="Hosoyama A."/>
            <person name="Yamada R."/>
            <person name="Fujisawa T."/>
            <person name="Omata S."/>
            <person name="Shimizu A."/>
            <person name="Tsukatani N."/>
            <person name="Tanikawa S."/>
            <person name="Fujita N."/>
            <person name="Harayama S."/>
        </authorList>
    </citation>
    <scope>NUCLEOTIDE SEQUENCE [LARGE SCALE GENOMIC DNA]</scope>
    <source>
        <strain>PR4 / NBRC 100887</strain>
    </source>
</reference>
<organism>
    <name type="scientific">Rhodococcus erythropolis (strain PR4 / NBRC 100887)</name>
    <dbReference type="NCBI Taxonomy" id="234621"/>
    <lineage>
        <taxon>Bacteria</taxon>
        <taxon>Bacillati</taxon>
        <taxon>Actinomycetota</taxon>
        <taxon>Actinomycetes</taxon>
        <taxon>Mycobacteriales</taxon>
        <taxon>Nocardiaceae</taxon>
        <taxon>Rhodococcus</taxon>
        <taxon>Rhodococcus erythropolis group</taxon>
    </lineage>
</organism>
<dbReference type="EC" id="2.2.1.7" evidence="1"/>
<dbReference type="EMBL" id="AP008957">
    <property type="protein sequence ID" value="BAH33544.1"/>
    <property type="molecule type" value="Genomic_DNA"/>
</dbReference>
<dbReference type="RefSeq" id="WP_019748259.1">
    <property type="nucleotide sequence ID" value="NC_012490.1"/>
</dbReference>
<dbReference type="SMR" id="C0ZYV9"/>
<dbReference type="KEGG" id="rer:RER_28360"/>
<dbReference type="eggNOG" id="COG1154">
    <property type="taxonomic scope" value="Bacteria"/>
</dbReference>
<dbReference type="HOGENOM" id="CLU_009227_1_4_11"/>
<dbReference type="UniPathway" id="UPA00064">
    <property type="reaction ID" value="UER00091"/>
</dbReference>
<dbReference type="Proteomes" id="UP000002204">
    <property type="component" value="Chromosome"/>
</dbReference>
<dbReference type="GO" id="GO:0005829">
    <property type="term" value="C:cytosol"/>
    <property type="evidence" value="ECO:0007669"/>
    <property type="project" value="TreeGrafter"/>
</dbReference>
<dbReference type="GO" id="GO:0008661">
    <property type="term" value="F:1-deoxy-D-xylulose-5-phosphate synthase activity"/>
    <property type="evidence" value="ECO:0007669"/>
    <property type="project" value="UniProtKB-UniRule"/>
</dbReference>
<dbReference type="GO" id="GO:0000287">
    <property type="term" value="F:magnesium ion binding"/>
    <property type="evidence" value="ECO:0007669"/>
    <property type="project" value="UniProtKB-UniRule"/>
</dbReference>
<dbReference type="GO" id="GO:0030976">
    <property type="term" value="F:thiamine pyrophosphate binding"/>
    <property type="evidence" value="ECO:0007669"/>
    <property type="project" value="UniProtKB-UniRule"/>
</dbReference>
<dbReference type="GO" id="GO:0052865">
    <property type="term" value="P:1-deoxy-D-xylulose 5-phosphate biosynthetic process"/>
    <property type="evidence" value="ECO:0007669"/>
    <property type="project" value="UniProtKB-UniPathway"/>
</dbReference>
<dbReference type="GO" id="GO:0019288">
    <property type="term" value="P:isopentenyl diphosphate biosynthetic process, methylerythritol 4-phosphate pathway"/>
    <property type="evidence" value="ECO:0007669"/>
    <property type="project" value="TreeGrafter"/>
</dbReference>
<dbReference type="GO" id="GO:0016114">
    <property type="term" value="P:terpenoid biosynthetic process"/>
    <property type="evidence" value="ECO:0007669"/>
    <property type="project" value="UniProtKB-UniRule"/>
</dbReference>
<dbReference type="GO" id="GO:0009228">
    <property type="term" value="P:thiamine biosynthetic process"/>
    <property type="evidence" value="ECO:0007669"/>
    <property type="project" value="UniProtKB-UniRule"/>
</dbReference>
<dbReference type="CDD" id="cd02007">
    <property type="entry name" value="TPP_DXS"/>
    <property type="match status" value="1"/>
</dbReference>
<dbReference type="CDD" id="cd07033">
    <property type="entry name" value="TPP_PYR_DXS_TK_like"/>
    <property type="match status" value="1"/>
</dbReference>
<dbReference type="FunFam" id="3.40.50.920:FF:000002">
    <property type="entry name" value="1-deoxy-D-xylulose-5-phosphate synthase"/>
    <property type="match status" value="1"/>
</dbReference>
<dbReference type="FunFam" id="3.40.50.970:FF:000005">
    <property type="entry name" value="1-deoxy-D-xylulose-5-phosphate synthase"/>
    <property type="match status" value="1"/>
</dbReference>
<dbReference type="Gene3D" id="3.40.50.920">
    <property type="match status" value="1"/>
</dbReference>
<dbReference type="Gene3D" id="3.40.50.970">
    <property type="match status" value="2"/>
</dbReference>
<dbReference type="HAMAP" id="MF_00315">
    <property type="entry name" value="DXP_synth"/>
    <property type="match status" value="1"/>
</dbReference>
<dbReference type="InterPro" id="IPR005477">
    <property type="entry name" value="Dxylulose-5-P_synthase"/>
</dbReference>
<dbReference type="InterPro" id="IPR029061">
    <property type="entry name" value="THDP-binding"/>
</dbReference>
<dbReference type="InterPro" id="IPR009014">
    <property type="entry name" value="Transketo_C/PFOR_II"/>
</dbReference>
<dbReference type="InterPro" id="IPR005475">
    <property type="entry name" value="Transketolase-like_Pyr-bd"/>
</dbReference>
<dbReference type="InterPro" id="IPR020826">
    <property type="entry name" value="Transketolase_BS"/>
</dbReference>
<dbReference type="InterPro" id="IPR033248">
    <property type="entry name" value="Transketolase_C"/>
</dbReference>
<dbReference type="NCBIfam" id="TIGR00204">
    <property type="entry name" value="dxs"/>
    <property type="match status" value="1"/>
</dbReference>
<dbReference type="NCBIfam" id="NF003933">
    <property type="entry name" value="PRK05444.2-2"/>
    <property type="match status" value="1"/>
</dbReference>
<dbReference type="PANTHER" id="PTHR43322">
    <property type="entry name" value="1-D-DEOXYXYLULOSE 5-PHOSPHATE SYNTHASE-RELATED"/>
    <property type="match status" value="1"/>
</dbReference>
<dbReference type="PANTHER" id="PTHR43322:SF5">
    <property type="entry name" value="1-DEOXY-D-XYLULOSE-5-PHOSPHATE SYNTHASE, CHLOROPLASTIC"/>
    <property type="match status" value="1"/>
</dbReference>
<dbReference type="Pfam" id="PF13292">
    <property type="entry name" value="DXP_synthase_N"/>
    <property type="match status" value="1"/>
</dbReference>
<dbReference type="Pfam" id="PF02779">
    <property type="entry name" value="Transket_pyr"/>
    <property type="match status" value="1"/>
</dbReference>
<dbReference type="Pfam" id="PF02780">
    <property type="entry name" value="Transketolase_C"/>
    <property type="match status" value="1"/>
</dbReference>
<dbReference type="SMART" id="SM00861">
    <property type="entry name" value="Transket_pyr"/>
    <property type="match status" value="1"/>
</dbReference>
<dbReference type="SUPFAM" id="SSF52518">
    <property type="entry name" value="Thiamin diphosphate-binding fold (THDP-binding)"/>
    <property type="match status" value="2"/>
</dbReference>
<dbReference type="SUPFAM" id="SSF52922">
    <property type="entry name" value="TK C-terminal domain-like"/>
    <property type="match status" value="1"/>
</dbReference>
<dbReference type="PROSITE" id="PS00802">
    <property type="entry name" value="TRANSKETOLASE_2"/>
    <property type="match status" value="1"/>
</dbReference>
<sequence length="648" mass="68293">MGVLARIQGPDDLRQLSHAEMTELADEIREFLVLKVAATGGHLGPNLGVVELTLALHRIFDSPQDAIIFDTGHQAYVHKILTGRQDQFDTLRKQGGLSGYPCRAESEHDWVESSHASAALSYADGLAKAFALTGQNRHVVAVVGDGALTGGMCWEALNNIAAGKDRSVVIVVNDNGRSYAPTIGGLADHLSALRTAPSYERALDSGRRMVKRLPWVGRTAYSVLHGMKAGLKDAVSPQVMFTDLGIKYLGPVDGHDEAAMESALRRAKAYGGPVIVHAVTRKGNGYAHAENDVADQMHATGVIDPVTGRGTKSSAPDWTSVFSAALIEQASRREDIVAITAAMAGPTGLAAFGEKFPDRIFDVGIAEQHAMTSAAGLALGGLHPVVAIYSTFLNRAFDQLLMDVALLKQPVTVVLDRAGVTGVDGASHNGVWDLSLLGIIPGIRVAAPRDADTLREELDEALLVDDGPTVVRFPKGAVPEAIPAVKRLDGMVDVLKASEGERGDVLLVAVGPFASLALEIAERLDKQGISVAVVDPRWVLPVADSLVKMADKYALVVTIEDGGLHGGIGSTVSAAMRAAGVHTSCRDMGVPQQFLDHASREAIHKELGLTAQDLSRKITGWVAGMGSVGVHVQEDASSASAQGEVAQG</sequence>
<keyword id="KW-0414">Isoprene biosynthesis</keyword>
<keyword id="KW-0460">Magnesium</keyword>
<keyword id="KW-0479">Metal-binding</keyword>
<keyword id="KW-0784">Thiamine biosynthesis</keyword>
<keyword id="KW-0786">Thiamine pyrophosphate</keyword>
<keyword id="KW-0808">Transferase</keyword>
<protein>
    <recommendedName>
        <fullName evidence="1">1-deoxy-D-xylulose-5-phosphate synthase</fullName>
        <ecNumber evidence="1">2.2.1.7</ecNumber>
    </recommendedName>
    <alternativeName>
        <fullName evidence="1">1-deoxyxylulose-5-phosphate synthase</fullName>
        <shortName evidence="1">DXP synthase</shortName>
        <shortName evidence="1">DXPS</shortName>
    </alternativeName>
</protein>